<keyword id="KW-1003">Cell membrane</keyword>
<keyword id="KW-0169">Cobalamin biosynthesis</keyword>
<keyword id="KW-0170">Cobalt</keyword>
<keyword id="KW-0171">Cobalt transport</keyword>
<keyword id="KW-0406">Ion transport</keyword>
<keyword id="KW-0472">Membrane</keyword>
<keyword id="KW-1185">Reference proteome</keyword>
<keyword id="KW-0812">Transmembrane</keyword>
<keyword id="KW-1133">Transmembrane helix</keyword>
<keyword id="KW-0813">Transport</keyword>
<comment type="function">
    <text evidence="1">Part of the energy-coupling factor (ECF) transporter complex CbiMNOQ involved in cobalt import.</text>
</comment>
<comment type="pathway">
    <text>Cofactor biosynthesis; adenosylcobalamin biosynthesis.</text>
</comment>
<comment type="subunit">
    <text evidence="1">Forms an energy-coupling factor (ECF) transporter complex composed of an ATP-binding protein (A component, CbiO), a transmembrane protein (T component, CbiQ) and 2 possible substrate-capture proteins (S components, CbiM and CbiN) of unknown stoichimetry.</text>
</comment>
<comment type="subcellular location">
    <subcellularLocation>
        <location evidence="1">Cell membrane</location>
        <topology evidence="1">Multi-pass membrane protein</topology>
    </subcellularLocation>
</comment>
<comment type="similarity">
    <text evidence="3">In the N-terminal section; belongs to the CbiM family.</text>
</comment>
<comment type="similarity">
    <text evidence="3">In the C-terminal section; belongs to the CbiQ family.</text>
</comment>
<dbReference type="EMBL" id="CP000559">
    <property type="protein sequence ID" value="ABN07242.1"/>
    <property type="molecule type" value="Genomic_DNA"/>
</dbReference>
<dbReference type="RefSeq" id="WP_011833445.1">
    <property type="nucleotide sequence ID" value="NC_008942.1"/>
</dbReference>
<dbReference type="SMR" id="A2SSD6"/>
<dbReference type="STRING" id="410358.Mlab_1073"/>
<dbReference type="GeneID" id="89920595"/>
<dbReference type="KEGG" id="mla:Mlab_1073"/>
<dbReference type="eggNOG" id="arCOG02248">
    <property type="taxonomic scope" value="Archaea"/>
</dbReference>
<dbReference type="eggNOG" id="arCOG02249">
    <property type="taxonomic scope" value="Archaea"/>
</dbReference>
<dbReference type="HOGENOM" id="CLU_455368_0_0_2"/>
<dbReference type="OrthoDB" id="147966at2157"/>
<dbReference type="UniPathway" id="UPA00148"/>
<dbReference type="Proteomes" id="UP000000365">
    <property type="component" value="Chromosome"/>
</dbReference>
<dbReference type="GO" id="GO:0043190">
    <property type="term" value="C:ATP-binding cassette (ABC) transporter complex"/>
    <property type="evidence" value="ECO:0007669"/>
    <property type="project" value="InterPro"/>
</dbReference>
<dbReference type="GO" id="GO:0015087">
    <property type="term" value="F:cobalt ion transmembrane transporter activity"/>
    <property type="evidence" value="ECO:0007669"/>
    <property type="project" value="UniProtKB-UniRule"/>
</dbReference>
<dbReference type="GO" id="GO:0009236">
    <property type="term" value="P:cobalamin biosynthetic process"/>
    <property type="evidence" value="ECO:0007669"/>
    <property type="project" value="UniProtKB-UniRule"/>
</dbReference>
<dbReference type="CDD" id="cd16914">
    <property type="entry name" value="EcfT"/>
    <property type="match status" value="1"/>
</dbReference>
<dbReference type="Gene3D" id="1.10.1760.20">
    <property type="match status" value="1"/>
</dbReference>
<dbReference type="HAMAP" id="MF_01462">
    <property type="entry name" value="CbiM"/>
    <property type="match status" value="1"/>
</dbReference>
<dbReference type="InterPro" id="IPR003339">
    <property type="entry name" value="ABC/ECF_trnsptr_transmembrane"/>
</dbReference>
<dbReference type="InterPro" id="IPR018024">
    <property type="entry name" value="CbiM"/>
</dbReference>
<dbReference type="InterPro" id="IPR002751">
    <property type="entry name" value="CbiM/NikMN"/>
</dbReference>
<dbReference type="InterPro" id="IPR012809">
    <property type="entry name" value="ECF_CbiQ"/>
</dbReference>
<dbReference type="NCBIfam" id="TIGR00123">
    <property type="entry name" value="cbiM"/>
    <property type="match status" value="1"/>
</dbReference>
<dbReference type="NCBIfam" id="TIGR02454">
    <property type="entry name" value="ECF_T_CbiQ"/>
    <property type="match status" value="1"/>
</dbReference>
<dbReference type="NCBIfam" id="NF006184">
    <property type="entry name" value="PRK08319.1"/>
    <property type="match status" value="1"/>
</dbReference>
<dbReference type="PANTHER" id="PTHR43627">
    <property type="match status" value="1"/>
</dbReference>
<dbReference type="PANTHER" id="PTHR43627:SF1">
    <property type="entry name" value="COBALT TRANSPORT PROTEIN CBIM"/>
    <property type="match status" value="1"/>
</dbReference>
<dbReference type="Pfam" id="PF01891">
    <property type="entry name" value="CbiM"/>
    <property type="match status" value="1"/>
</dbReference>
<dbReference type="Pfam" id="PF02361">
    <property type="entry name" value="CbiQ"/>
    <property type="match status" value="1"/>
</dbReference>
<sequence>MHIMEGFLPSPWWQFWALLAVVCVLAGMAALIRLVKRNPESLPLLGLAGACVFILSSLKLPSVGSSSHATGTGFGAILFGPAVCSVFCTIVLVFQALLLAHGGITTLGANIISMGVAGPLAACIIFKIGHLIRPEFSIRSFSVTVFCAAAAADLVTYMMTSLQLALAYPAAEGGVLASFVVYLGIFSITQVPLAVLEGILIVLMMRFVIRIRPDIFVSLDILSKKETRILLPSSDQNLSPISKNKWIIAGIIVVLLTASLAFLLAGLGLQSGSDDLVAETLIDLGNLPVFDPLNLVSEDMHGWLFALQAGIGAAVLVFCLYLLRIRSASRGFGKKPHTIFDEHILDDVAIASPLRQVSAWLKLLFCLSAIIIGVTSPLPYLPLFIAGVMIFAALIIAKVSPRLYGSLLTIPLVFAGTGAAVILLITGGGETLIDFFRIGAFHFQITTTSLELAALVLSRTLAGMCSLYFLTLTTPITSLFSVLQKMRMPQAFIDLSMLIYRYIFVFIGEAIAIHNAQIMRGGYGTWKNYLTSFSMLASMLFIRTWEKGEAIFVSMDSRCYDGCMALPEEEGHVTPLSAMAVFLFIALIFGLLCAEMLLL</sequence>
<protein>
    <recommendedName>
        <fullName>Putative fused cobalt transport protein CbiMQ</fullName>
    </recommendedName>
    <alternativeName>
        <fullName>Energy-coupling factor transporter probable substrate-capture protein CbiMQ</fullName>
        <shortName>ECF transporter S component CbiMQ</shortName>
    </alternativeName>
</protein>
<name>CBIMQ_METLZ</name>
<organism>
    <name type="scientific">Methanocorpusculum labreanum (strain ATCC 43576 / DSM 4855 / Z)</name>
    <dbReference type="NCBI Taxonomy" id="410358"/>
    <lineage>
        <taxon>Archaea</taxon>
        <taxon>Methanobacteriati</taxon>
        <taxon>Methanobacteriota</taxon>
        <taxon>Stenosarchaea group</taxon>
        <taxon>Methanomicrobia</taxon>
        <taxon>Methanomicrobiales</taxon>
        <taxon>Methanocorpusculaceae</taxon>
        <taxon>Methanocorpusculum</taxon>
    </lineage>
</organism>
<evidence type="ECO:0000250" key="1"/>
<evidence type="ECO:0000255" key="2"/>
<evidence type="ECO:0000305" key="3"/>
<feature type="chain" id="PRO_0000411157" description="Putative fused cobalt transport protein CbiMQ">
    <location>
        <begin position="1"/>
        <end position="599"/>
    </location>
</feature>
<feature type="transmembrane region" description="Helical" evidence="2">
    <location>
        <begin position="12"/>
        <end position="32"/>
    </location>
</feature>
<feature type="transmembrane region" description="Helical" evidence="2">
    <location>
        <begin position="44"/>
        <end position="64"/>
    </location>
</feature>
<feature type="transmembrane region" description="Helical" evidence="2">
    <location>
        <begin position="74"/>
        <end position="94"/>
    </location>
</feature>
<feature type="transmembrane region" description="Helical" evidence="2">
    <location>
        <begin position="106"/>
        <end position="126"/>
    </location>
</feature>
<feature type="transmembrane region" description="Helical" evidence="2">
    <location>
        <begin position="140"/>
        <end position="160"/>
    </location>
</feature>
<feature type="transmembrane region" description="Helical" evidence="2">
    <location>
        <begin position="162"/>
        <end position="182"/>
    </location>
</feature>
<feature type="transmembrane region" description="Helical" evidence="2">
    <location>
        <begin position="183"/>
        <end position="203"/>
    </location>
</feature>
<feature type="transmembrane region" description="Helical" evidence="2">
    <location>
        <begin position="247"/>
        <end position="267"/>
    </location>
</feature>
<feature type="transmembrane region" description="Helical" evidence="2">
    <location>
        <begin position="303"/>
        <end position="323"/>
    </location>
</feature>
<feature type="transmembrane region" description="Helical" evidence="2">
    <location>
        <begin position="356"/>
        <end position="376"/>
    </location>
</feature>
<feature type="transmembrane region" description="Helical" evidence="2">
    <location>
        <begin position="377"/>
        <end position="397"/>
    </location>
</feature>
<feature type="transmembrane region" description="Helical" evidence="2">
    <location>
        <begin position="407"/>
        <end position="427"/>
    </location>
</feature>
<feature type="transmembrane region" description="Helical" evidence="2">
    <location>
        <begin position="438"/>
        <end position="458"/>
    </location>
</feature>
<feature type="transmembrane region" description="Helical" evidence="2">
    <location>
        <begin position="463"/>
        <end position="483"/>
    </location>
</feature>
<feature type="transmembrane region" description="Helical" evidence="2">
    <location>
        <begin position="493"/>
        <end position="513"/>
    </location>
</feature>
<feature type="transmembrane region" description="Helical" evidence="2">
    <location>
        <begin position="579"/>
        <end position="599"/>
    </location>
</feature>
<feature type="region of interest" description="CbiM">
    <location>
        <begin position="1"/>
        <end position="239"/>
    </location>
</feature>
<feature type="region of interest" description="CbiQ">
    <location>
        <begin position="341"/>
        <end position="599"/>
    </location>
</feature>
<gene>
    <name type="primary">cbiMQ</name>
    <name type="ordered locus">Mlab_1073</name>
</gene>
<reference key="1">
    <citation type="journal article" date="2009" name="Stand. Genomic Sci.">
        <title>Complete genome sequence of Methanocorpusculum labreanum type strain Z.</title>
        <authorList>
            <person name="Anderson I.J."/>
            <person name="Sieprawska-Lupa M."/>
            <person name="Goltsman E."/>
            <person name="Lapidus A."/>
            <person name="Copeland A."/>
            <person name="Glavina Del Rio T."/>
            <person name="Tice H."/>
            <person name="Dalin E."/>
            <person name="Barry K."/>
            <person name="Pitluck S."/>
            <person name="Hauser L."/>
            <person name="Land M."/>
            <person name="Lucas S."/>
            <person name="Richardson P."/>
            <person name="Whitman W.B."/>
            <person name="Kyrpides N.C."/>
        </authorList>
    </citation>
    <scope>NUCLEOTIDE SEQUENCE [LARGE SCALE GENOMIC DNA]</scope>
    <source>
        <strain>ATCC 43576 / DSM 4855 / Z</strain>
    </source>
</reference>
<accession>A2SSD6</accession>
<proteinExistence type="inferred from homology"/>